<organismHost>
    <name type="scientific">Sus scrofa</name>
    <name type="common">Pig</name>
    <dbReference type="NCBI Taxonomy" id="9823"/>
</organismHost>
<dbReference type="EMBL" id="Z24733">
    <property type="protein sequence ID" value="CAA80855.1"/>
    <property type="molecule type" value="Genomic_RNA"/>
</dbReference>
<dbReference type="EMBL" id="AF353511">
    <property type="protein sequence ID" value="AAK38657.1"/>
    <property type="molecule type" value="Genomic_RNA"/>
</dbReference>
<dbReference type="PIR" id="B49591">
    <property type="entry name" value="B49591"/>
</dbReference>
<dbReference type="RefSeq" id="NP_598311.1">
    <property type="nucleotide sequence ID" value="NC_003436.1"/>
</dbReference>
<dbReference type="KEGG" id="vg:935183"/>
<dbReference type="Proteomes" id="UP000008159">
    <property type="component" value="Segment"/>
</dbReference>
<dbReference type="GO" id="GO:0033644">
    <property type="term" value="C:host cell membrane"/>
    <property type="evidence" value="ECO:0007669"/>
    <property type="project" value="UniProtKB-SubCell"/>
</dbReference>
<dbReference type="GO" id="GO:0016020">
    <property type="term" value="C:membrane"/>
    <property type="evidence" value="ECO:0007669"/>
    <property type="project" value="UniProtKB-KW"/>
</dbReference>
<dbReference type="InterPro" id="IPR046446">
    <property type="entry name" value="a/bCoV_VIROPORIN_3A-like_CD"/>
</dbReference>
<dbReference type="InterPro" id="IPR046445">
    <property type="entry name" value="a/bCoV_VIROPORIN_3A-like_TM"/>
</dbReference>
<dbReference type="InterPro" id="IPR004293">
    <property type="entry name" value="Coronavirus_Orf3a/b"/>
</dbReference>
<dbReference type="Pfam" id="PF03053">
    <property type="entry name" value="Corona_NS3b"/>
    <property type="match status" value="1"/>
</dbReference>
<dbReference type="PROSITE" id="PS51967">
    <property type="entry name" value="COV_VIROPORIN_3A_CD"/>
    <property type="match status" value="1"/>
</dbReference>
<dbReference type="PROSITE" id="PS51966">
    <property type="entry name" value="COV_VIROPORIN_3A_TM"/>
    <property type="match status" value="1"/>
</dbReference>
<comment type="subcellular location">
    <subcellularLocation>
        <location evidence="4">Host membrane</location>
        <topology evidence="4">Multi-pass membrane protein</topology>
    </subcellularLocation>
</comment>
<reference key="1">
    <citation type="journal article" date="1994" name="Virology">
        <title>Sequence analysis of the porcine epidemic diarrhea virus genome between the nucleocapsid and spike protein genes reveals a polymorphic ORF.</title>
        <authorList>
            <person name="Duarte M."/>
            <person name="Tobler K."/>
            <person name="Bridgen A."/>
            <person name="Rasschaert D."/>
            <person name="Ackermann M."/>
            <person name="Laude H."/>
        </authorList>
    </citation>
    <scope>NUCLEOTIDE SEQUENCE [GENOMIC RNA]</scope>
</reference>
<reference key="2">
    <citation type="journal article" date="1998" name="Adv. Exp. Med. Biol.">
        <title>Further analysis of the genome of porcine epidemic diarrhea virus.</title>
        <authorList>
            <person name="Bridgen A."/>
            <person name="Kocherhans R."/>
            <person name="Tobler K."/>
            <person name="Carvajal A."/>
            <person name="Ackermann M."/>
        </authorList>
    </citation>
    <scope>NUCLEOTIDE SEQUENCE [GENOMIC RNA]</scope>
</reference>
<reference key="3">
    <citation type="journal article" date="2001" name="Virus Genes">
        <title>Completion of the porcine epidemic diarrhoea coronavirus (PEDV) genome sequence.</title>
        <authorList>
            <person name="Kocherhans R."/>
            <person name="Bridgen A."/>
            <person name="Ackermann M."/>
            <person name="Tobler K."/>
        </authorList>
    </citation>
    <scope>NUCLEOTIDE SEQUENCE [GENOMIC RNA]</scope>
</reference>
<name>NS3_PEDV7</name>
<evidence type="ECO:0000255" key="1"/>
<evidence type="ECO:0000255" key="2">
    <source>
        <dbReference type="PROSITE-ProRule" id="PRU01311"/>
    </source>
</evidence>
<evidence type="ECO:0000255" key="3">
    <source>
        <dbReference type="PROSITE-ProRule" id="PRU01312"/>
    </source>
</evidence>
<evidence type="ECO:0000305" key="4"/>
<keyword id="KW-1043">Host membrane</keyword>
<keyword id="KW-0472">Membrane</keyword>
<keyword id="KW-0812">Transmembrane</keyword>
<keyword id="KW-1133">Transmembrane helix</keyword>
<accession>Q91AV0</accession>
<accession>Q84705</accession>
<proteinExistence type="predicted"/>
<protein>
    <recommendedName>
        <fullName>Non-structural protein 3</fullName>
        <shortName>ns3</shortName>
    </recommendedName>
    <alternativeName>
        <fullName>Accessory protein 3a</fullName>
    </alternativeName>
</protein>
<feature type="chain" id="PRO_0000284091" description="Non-structural protein 3">
    <location>
        <begin position="1"/>
        <end position="224"/>
    </location>
</feature>
<feature type="transmembrane region" description="Helical" evidence="1">
    <location>
        <begin position="40"/>
        <end position="60"/>
    </location>
</feature>
<feature type="transmembrane region" description="Helical" evidence="1">
    <location>
        <begin position="69"/>
        <end position="88"/>
    </location>
</feature>
<feature type="transmembrane region" description="Helical" evidence="1">
    <location>
        <begin position="95"/>
        <end position="111"/>
    </location>
</feature>
<feature type="domain" description="CoV 3a-like viroporin TM" evidence="2">
    <location>
        <begin position="34"/>
        <end position="124"/>
    </location>
</feature>
<feature type="domain" description="CoV 3a-like viroporin CD" evidence="3">
    <location>
        <begin position="128"/>
        <end position="203"/>
    </location>
</feature>
<feature type="sequence variant">
    <location>
        <position position="138"/>
    </location>
</feature>
<feature type="sequence variant">
    <original>Y</original>
    <variation>N</variation>
    <location>
        <position position="196"/>
    </location>
</feature>
<organism>
    <name type="scientific">Porcine epidemic diarrhea virus (strain CV777)</name>
    <name type="common">PEDV</name>
    <dbReference type="NCBI Taxonomy" id="229032"/>
    <lineage>
        <taxon>Viruses</taxon>
        <taxon>Riboviria</taxon>
        <taxon>Orthornavirae</taxon>
        <taxon>Pisuviricota</taxon>
        <taxon>Pisoniviricetes</taxon>
        <taxon>Nidovirales</taxon>
        <taxon>Cornidovirineae</taxon>
        <taxon>Coronaviridae</taxon>
        <taxon>Orthocoronavirinae</taxon>
        <taxon>Alphacoronavirus</taxon>
        <taxon>Pedacovirus</taxon>
        <taxon>Porcine epidemic diarrhea virus</taxon>
    </lineage>
</organism>
<sequence length="224" mass="25280">MFLGLFQYTIDTVVKDVSKSVNLSLDAVQELELNVVPIRQASNVTGFLFTSVFVYFFALFKASSLRRNYIMLAARFAVVFLYCPLLYYCGALLDATIICCALIGRLCLVCFYSWRYKNALFIIFNTTTLSFLNGKAAYYDGKSIVILEGGDHYITFGNSFVAFVSNIDLYLAIRGRQEADLHLLRTVELLDGKKLYVFSQHQIVGITNAAFDSIQLDEYATISE</sequence>
<gene>
    <name type="ORF">3</name>
</gene>